<dbReference type="EMBL" id="AE013599">
    <property type="protein sequence ID" value="AAF57755.1"/>
    <property type="molecule type" value="Genomic_DNA"/>
</dbReference>
<dbReference type="EMBL" id="AE013599">
    <property type="protein sequence ID" value="ABV53840.1"/>
    <property type="molecule type" value="Genomic_DNA"/>
</dbReference>
<dbReference type="EMBL" id="BT015279">
    <property type="protein sequence ID" value="AAT94508.1"/>
    <property type="molecule type" value="mRNA"/>
</dbReference>
<dbReference type="RefSeq" id="NP_001097363.1">
    <molecule id="Q6AWG9-2"/>
    <property type="nucleotide sequence ID" value="NM_001103893.2"/>
</dbReference>
<dbReference type="RefSeq" id="NP_611291.1">
    <molecule id="Q6AWG9-1"/>
    <property type="nucleotide sequence ID" value="NM_137447.4"/>
</dbReference>
<dbReference type="BioGRID" id="62747">
    <property type="interactions" value="3"/>
</dbReference>
<dbReference type="FunCoup" id="Q6AWG9">
    <property type="interactions" value="253"/>
</dbReference>
<dbReference type="IntAct" id="Q6AWG9">
    <property type="interactions" value="2"/>
</dbReference>
<dbReference type="STRING" id="7227.FBpp0303029"/>
<dbReference type="GlyGen" id="Q6AWG9">
    <property type="glycosylation" value="1 site"/>
</dbReference>
<dbReference type="iPTMnet" id="Q6AWG9"/>
<dbReference type="PaxDb" id="7227-FBpp0112005"/>
<dbReference type="EnsemblMetazoa" id="FBtr0086732">
    <molecule id="Q6AWG9-1"/>
    <property type="protein sequence ID" value="FBpp0085911"/>
    <property type="gene ID" value="FBgn0034300"/>
</dbReference>
<dbReference type="EnsemblMetazoa" id="FBtr0113092">
    <molecule id="Q6AWG9-2"/>
    <property type="protein sequence ID" value="FBpp0112005"/>
    <property type="gene ID" value="FBgn0034300"/>
</dbReference>
<dbReference type="GeneID" id="37063"/>
<dbReference type="KEGG" id="dme:Dmel_CG5098"/>
<dbReference type="UCSC" id="CG5098-RA">
    <molecule id="Q6AWG9-1"/>
    <property type="organism name" value="d. melanogaster"/>
</dbReference>
<dbReference type="UCSC" id="CG5098-RB">
    <property type="organism name" value="d. melanogaster"/>
</dbReference>
<dbReference type="AGR" id="FB:FBgn0034300"/>
<dbReference type="FlyBase" id="FBgn0034300">
    <property type="gene designation" value="CG5098"/>
</dbReference>
<dbReference type="VEuPathDB" id="VectorBase:FBgn0034300"/>
<dbReference type="eggNOG" id="KOG1084">
    <property type="taxonomic scope" value="Eukaryota"/>
</dbReference>
<dbReference type="GeneTree" id="ENSGT00940000172444"/>
<dbReference type="HOGENOM" id="CLU_259871_0_0_1"/>
<dbReference type="InParanoid" id="Q6AWG9"/>
<dbReference type="OrthoDB" id="10029243at2759"/>
<dbReference type="BioGRID-ORCS" id="37063">
    <property type="hits" value="0 hits in 3 CRISPR screens"/>
</dbReference>
<dbReference type="GenomeRNAi" id="37063"/>
<dbReference type="PRO" id="PR:Q6AWG9"/>
<dbReference type="Proteomes" id="UP000000803">
    <property type="component" value="Chromosome 2R"/>
</dbReference>
<dbReference type="Bgee" id="FBgn0034300">
    <property type="expression patterns" value="Expressed in antennal olfactory receptor neuron of basiconic sensillum in antenna and 142 other cell types or tissues"/>
</dbReference>
<dbReference type="ExpressionAtlas" id="Q6AWG9">
    <property type="expression patterns" value="baseline and differential"/>
</dbReference>
<dbReference type="GO" id="GO:0005634">
    <property type="term" value="C:nucleus"/>
    <property type="evidence" value="ECO:0000318"/>
    <property type="project" value="GO_Central"/>
</dbReference>
<dbReference type="GO" id="GO:0008270">
    <property type="term" value="F:zinc ion binding"/>
    <property type="evidence" value="ECO:0007669"/>
    <property type="project" value="UniProtKB-KW"/>
</dbReference>
<dbReference type="GO" id="GO:0006357">
    <property type="term" value="P:regulation of transcription by RNA polymerase II"/>
    <property type="evidence" value="ECO:0000318"/>
    <property type="project" value="GO_Central"/>
</dbReference>
<dbReference type="FunFam" id="3.30.40.10:FF:000719">
    <property type="entry name" value="Uncharacterized protein, isoform C"/>
    <property type="match status" value="1"/>
</dbReference>
<dbReference type="Gene3D" id="3.30.40.10">
    <property type="entry name" value="Zinc/RING finger domain, C3HC4 (zinc finger)"/>
    <property type="match status" value="1"/>
</dbReference>
<dbReference type="InterPro" id="IPR034732">
    <property type="entry name" value="EPHD"/>
</dbReference>
<dbReference type="InterPro" id="IPR052440">
    <property type="entry name" value="Trans_Reg/Chrom_Remod"/>
</dbReference>
<dbReference type="InterPro" id="IPR013083">
    <property type="entry name" value="Znf_RING/FYVE/PHD"/>
</dbReference>
<dbReference type="PANTHER" id="PTHR14955:SF4">
    <property type="entry name" value="PHD-TYPE DOMAIN-CONTAINING PROTEIN"/>
    <property type="match status" value="1"/>
</dbReference>
<dbReference type="PANTHER" id="PTHR14955">
    <property type="entry name" value="RETINOIC ACID INDUCED 1/TRANSCRIPTION FACTOR 20"/>
    <property type="match status" value="1"/>
</dbReference>
<dbReference type="Pfam" id="PF13771">
    <property type="entry name" value="zf-HC5HC2H"/>
    <property type="match status" value="1"/>
</dbReference>
<dbReference type="PROSITE" id="PS51805">
    <property type="entry name" value="EPHD"/>
    <property type="match status" value="1"/>
</dbReference>
<feature type="chain" id="PRO_0000355631" description="Uncharacterized protein CG5098">
    <location>
        <begin position="1"/>
        <end position="1238"/>
    </location>
</feature>
<feature type="zinc finger region" description="C2HC pre-PHD-type; degenerate" evidence="1">
    <location>
        <begin position="1089"/>
        <end position="1131"/>
    </location>
</feature>
<feature type="zinc finger region" description="PHD-type" evidence="1">
    <location>
        <begin position="1151"/>
        <end position="1199"/>
    </location>
</feature>
<feature type="region of interest" description="Disordered" evidence="2">
    <location>
        <begin position="22"/>
        <end position="83"/>
    </location>
</feature>
<feature type="region of interest" description="Disordered" evidence="2">
    <location>
        <begin position="96"/>
        <end position="150"/>
    </location>
</feature>
<feature type="region of interest" description="Disordered" evidence="2">
    <location>
        <begin position="169"/>
        <end position="250"/>
    </location>
</feature>
<feature type="region of interest" description="Disordered" evidence="2">
    <location>
        <begin position="264"/>
        <end position="694"/>
    </location>
</feature>
<feature type="region of interest" description="Disordered" evidence="2">
    <location>
        <begin position="739"/>
        <end position="915"/>
    </location>
</feature>
<feature type="region of interest" description="Disordered" evidence="2">
    <location>
        <begin position="936"/>
        <end position="955"/>
    </location>
</feature>
<feature type="region of interest" description="Disordered" evidence="2">
    <location>
        <begin position="1057"/>
        <end position="1089"/>
    </location>
</feature>
<feature type="compositionally biased region" description="Low complexity" evidence="2">
    <location>
        <begin position="35"/>
        <end position="49"/>
    </location>
</feature>
<feature type="compositionally biased region" description="Polar residues" evidence="2">
    <location>
        <begin position="58"/>
        <end position="72"/>
    </location>
</feature>
<feature type="compositionally biased region" description="Low complexity" evidence="2">
    <location>
        <begin position="73"/>
        <end position="83"/>
    </location>
</feature>
<feature type="compositionally biased region" description="Polar residues" evidence="2">
    <location>
        <begin position="96"/>
        <end position="110"/>
    </location>
</feature>
<feature type="compositionally biased region" description="Low complexity" evidence="2">
    <location>
        <begin position="125"/>
        <end position="145"/>
    </location>
</feature>
<feature type="compositionally biased region" description="Polar residues" evidence="2">
    <location>
        <begin position="188"/>
        <end position="204"/>
    </location>
</feature>
<feature type="compositionally biased region" description="Low complexity" evidence="2">
    <location>
        <begin position="272"/>
        <end position="287"/>
    </location>
</feature>
<feature type="compositionally biased region" description="Low complexity" evidence="2">
    <location>
        <begin position="309"/>
        <end position="334"/>
    </location>
</feature>
<feature type="compositionally biased region" description="Low complexity" evidence="2">
    <location>
        <begin position="393"/>
        <end position="406"/>
    </location>
</feature>
<feature type="compositionally biased region" description="Polar residues" evidence="2">
    <location>
        <begin position="433"/>
        <end position="450"/>
    </location>
</feature>
<feature type="compositionally biased region" description="Polar residues" evidence="2">
    <location>
        <begin position="463"/>
        <end position="472"/>
    </location>
</feature>
<feature type="compositionally biased region" description="Basic and acidic residues" evidence="2">
    <location>
        <begin position="523"/>
        <end position="536"/>
    </location>
</feature>
<feature type="compositionally biased region" description="Low complexity" evidence="2">
    <location>
        <begin position="549"/>
        <end position="570"/>
    </location>
</feature>
<feature type="compositionally biased region" description="Low complexity" evidence="2">
    <location>
        <begin position="632"/>
        <end position="641"/>
    </location>
</feature>
<feature type="compositionally biased region" description="Basic and acidic residues" evidence="2">
    <location>
        <begin position="678"/>
        <end position="688"/>
    </location>
</feature>
<feature type="compositionally biased region" description="Polar residues" evidence="2">
    <location>
        <begin position="755"/>
        <end position="764"/>
    </location>
</feature>
<feature type="compositionally biased region" description="Low complexity" evidence="2">
    <location>
        <begin position="832"/>
        <end position="860"/>
    </location>
</feature>
<feature type="compositionally biased region" description="Basic residues" evidence="2">
    <location>
        <begin position="861"/>
        <end position="874"/>
    </location>
</feature>
<feature type="compositionally biased region" description="Basic and acidic residues" evidence="2">
    <location>
        <begin position="937"/>
        <end position="947"/>
    </location>
</feature>
<feature type="compositionally biased region" description="Polar residues" evidence="2">
    <location>
        <begin position="1071"/>
        <end position="1089"/>
    </location>
</feature>
<feature type="modified residue" description="Phosphoserine" evidence="3">
    <location>
        <position position="453"/>
    </location>
</feature>
<feature type="modified residue" description="Phosphothreonine" evidence="3">
    <location>
        <position position="642"/>
    </location>
</feature>
<feature type="modified residue" description="Phosphoserine" evidence="3">
    <location>
        <position position="682"/>
    </location>
</feature>
<feature type="modified residue" description="Phosphoserine" evidence="3">
    <location>
        <position position="749"/>
    </location>
</feature>
<feature type="modified residue" description="Phosphoserine" evidence="3">
    <location>
        <position position="753"/>
    </location>
</feature>
<feature type="modified residue" description="Phosphoserine" evidence="3">
    <location>
        <position position="793"/>
    </location>
</feature>
<feature type="modified residue" description="Phosphoserine" evidence="3">
    <location>
        <position position="799"/>
    </location>
</feature>
<feature type="modified residue" description="Phosphoserine" evidence="3">
    <location>
        <position position="1099"/>
    </location>
</feature>
<feature type="splice variant" id="VSP_035949" description="In isoform B." evidence="4">
    <original>M</original>
    <variation>MANNNHPHPGHLSQAAQNASWNPLQIPSYIPRQPQLAHMSNERPGMVRSPLAWHVSGTVSAQPPPPPDAIYNFMSANHKNLDHHHQM</variation>
    <location>
        <position position="1"/>
    </location>
</feature>
<feature type="splice variant" id="VSP_035950" description="In isoform B." evidence="4">
    <original>KP</original>
    <variation>KRKTHA</variation>
    <location>
        <begin position="208"/>
        <end position="209"/>
    </location>
</feature>
<reference key="1">
    <citation type="journal article" date="2000" name="Science">
        <title>The genome sequence of Drosophila melanogaster.</title>
        <authorList>
            <person name="Adams M.D."/>
            <person name="Celniker S.E."/>
            <person name="Holt R.A."/>
            <person name="Evans C.A."/>
            <person name="Gocayne J.D."/>
            <person name="Amanatides P.G."/>
            <person name="Scherer S.E."/>
            <person name="Li P.W."/>
            <person name="Hoskins R.A."/>
            <person name="Galle R.F."/>
            <person name="George R.A."/>
            <person name="Lewis S.E."/>
            <person name="Richards S."/>
            <person name="Ashburner M."/>
            <person name="Henderson S.N."/>
            <person name="Sutton G.G."/>
            <person name="Wortman J.R."/>
            <person name="Yandell M.D."/>
            <person name="Zhang Q."/>
            <person name="Chen L.X."/>
            <person name="Brandon R.C."/>
            <person name="Rogers Y.-H.C."/>
            <person name="Blazej R.G."/>
            <person name="Champe M."/>
            <person name="Pfeiffer B.D."/>
            <person name="Wan K.H."/>
            <person name="Doyle C."/>
            <person name="Baxter E.G."/>
            <person name="Helt G."/>
            <person name="Nelson C.R."/>
            <person name="Miklos G.L.G."/>
            <person name="Abril J.F."/>
            <person name="Agbayani A."/>
            <person name="An H.-J."/>
            <person name="Andrews-Pfannkoch C."/>
            <person name="Baldwin D."/>
            <person name="Ballew R.M."/>
            <person name="Basu A."/>
            <person name="Baxendale J."/>
            <person name="Bayraktaroglu L."/>
            <person name="Beasley E.M."/>
            <person name="Beeson K.Y."/>
            <person name="Benos P.V."/>
            <person name="Berman B.P."/>
            <person name="Bhandari D."/>
            <person name="Bolshakov S."/>
            <person name="Borkova D."/>
            <person name="Botchan M.R."/>
            <person name="Bouck J."/>
            <person name="Brokstein P."/>
            <person name="Brottier P."/>
            <person name="Burtis K.C."/>
            <person name="Busam D.A."/>
            <person name="Butler H."/>
            <person name="Cadieu E."/>
            <person name="Center A."/>
            <person name="Chandra I."/>
            <person name="Cherry J.M."/>
            <person name="Cawley S."/>
            <person name="Dahlke C."/>
            <person name="Davenport L.B."/>
            <person name="Davies P."/>
            <person name="de Pablos B."/>
            <person name="Delcher A."/>
            <person name="Deng Z."/>
            <person name="Mays A.D."/>
            <person name="Dew I."/>
            <person name="Dietz S.M."/>
            <person name="Dodson K."/>
            <person name="Doup L.E."/>
            <person name="Downes M."/>
            <person name="Dugan-Rocha S."/>
            <person name="Dunkov B.C."/>
            <person name="Dunn P."/>
            <person name="Durbin K.J."/>
            <person name="Evangelista C.C."/>
            <person name="Ferraz C."/>
            <person name="Ferriera S."/>
            <person name="Fleischmann W."/>
            <person name="Fosler C."/>
            <person name="Gabrielian A.E."/>
            <person name="Garg N.S."/>
            <person name="Gelbart W.M."/>
            <person name="Glasser K."/>
            <person name="Glodek A."/>
            <person name="Gong F."/>
            <person name="Gorrell J.H."/>
            <person name="Gu Z."/>
            <person name="Guan P."/>
            <person name="Harris M."/>
            <person name="Harris N.L."/>
            <person name="Harvey D.A."/>
            <person name="Heiman T.J."/>
            <person name="Hernandez J.R."/>
            <person name="Houck J."/>
            <person name="Hostin D."/>
            <person name="Houston K.A."/>
            <person name="Howland T.J."/>
            <person name="Wei M.-H."/>
            <person name="Ibegwam C."/>
            <person name="Jalali M."/>
            <person name="Kalush F."/>
            <person name="Karpen G.H."/>
            <person name="Ke Z."/>
            <person name="Kennison J.A."/>
            <person name="Ketchum K.A."/>
            <person name="Kimmel B.E."/>
            <person name="Kodira C.D."/>
            <person name="Kraft C.L."/>
            <person name="Kravitz S."/>
            <person name="Kulp D."/>
            <person name="Lai Z."/>
            <person name="Lasko P."/>
            <person name="Lei Y."/>
            <person name="Levitsky A.A."/>
            <person name="Li J.H."/>
            <person name="Li Z."/>
            <person name="Liang Y."/>
            <person name="Lin X."/>
            <person name="Liu X."/>
            <person name="Mattei B."/>
            <person name="McIntosh T.C."/>
            <person name="McLeod M.P."/>
            <person name="McPherson D."/>
            <person name="Merkulov G."/>
            <person name="Milshina N.V."/>
            <person name="Mobarry C."/>
            <person name="Morris J."/>
            <person name="Moshrefi A."/>
            <person name="Mount S.M."/>
            <person name="Moy M."/>
            <person name="Murphy B."/>
            <person name="Murphy L."/>
            <person name="Muzny D.M."/>
            <person name="Nelson D.L."/>
            <person name="Nelson D.R."/>
            <person name="Nelson K.A."/>
            <person name="Nixon K."/>
            <person name="Nusskern D.R."/>
            <person name="Pacleb J.M."/>
            <person name="Palazzolo M."/>
            <person name="Pittman G.S."/>
            <person name="Pan S."/>
            <person name="Pollard J."/>
            <person name="Puri V."/>
            <person name="Reese M.G."/>
            <person name="Reinert K."/>
            <person name="Remington K."/>
            <person name="Saunders R.D.C."/>
            <person name="Scheeler F."/>
            <person name="Shen H."/>
            <person name="Shue B.C."/>
            <person name="Siden-Kiamos I."/>
            <person name="Simpson M."/>
            <person name="Skupski M.P."/>
            <person name="Smith T.J."/>
            <person name="Spier E."/>
            <person name="Spradling A.C."/>
            <person name="Stapleton M."/>
            <person name="Strong R."/>
            <person name="Sun E."/>
            <person name="Svirskas R."/>
            <person name="Tector C."/>
            <person name="Turner R."/>
            <person name="Venter E."/>
            <person name="Wang A.H."/>
            <person name="Wang X."/>
            <person name="Wang Z.-Y."/>
            <person name="Wassarman D.A."/>
            <person name="Weinstock G.M."/>
            <person name="Weissenbach J."/>
            <person name="Williams S.M."/>
            <person name="Woodage T."/>
            <person name="Worley K.C."/>
            <person name="Wu D."/>
            <person name="Yang S."/>
            <person name="Yao Q.A."/>
            <person name="Ye J."/>
            <person name="Yeh R.-F."/>
            <person name="Zaveri J.S."/>
            <person name="Zhan M."/>
            <person name="Zhang G."/>
            <person name="Zhao Q."/>
            <person name="Zheng L."/>
            <person name="Zheng X.H."/>
            <person name="Zhong F.N."/>
            <person name="Zhong W."/>
            <person name="Zhou X."/>
            <person name="Zhu S.C."/>
            <person name="Zhu X."/>
            <person name="Smith H.O."/>
            <person name="Gibbs R.A."/>
            <person name="Myers E.W."/>
            <person name="Rubin G.M."/>
            <person name="Venter J.C."/>
        </authorList>
    </citation>
    <scope>NUCLEOTIDE SEQUENCE [LARGE SCALE GENOMIC DNA]</scope>
    <source>
        <strain>Berkeley</strain>
    </source>
</reference>
<reference key="2">
    <citation type="journal article" date="2002" name="Genome Biol.">
        <title>Annotation of the Drosophila melanogaster euchromatic genome: a systematic review.</title>
        <authorList>
            <person name="Misra S."/>
            <person name="Crosby M.A."/>
            <person name="Mungall C.J."/>
            <person name="Matthews B.B."/>
            <person name="Campbell K.S."/>
            <person name="Hradecky P."/>
            <person name="Huang Y."/>
            <person name="Kaminker J.S."/>
            <person name="Millburn G.H."/>
            <person name="Prochnik S.E."/>
            <person name="Smith C.D."/>
            <person name="Tupy J.L."/>
            <person name="Whitfield E.J."/>
            <person name="Bayraktaroglu L."/>
            <person name="Berman B.P."/>
            <person name="Bettencourt B.R."/>
            <person name="Celniker S.E."/>
            <person name="de Grey A.D.N.J."/>
            <person name="Drysdale R.A."/>
            <person name="Harris N.L."/>
            <person name="Richter J."/>
            <person name="Russo S."/>
            <person name="Schroeder A.J."/>
            <person name="Shu S.Q."/>
            <person name="Stapleton M."/>
            <person name="Yamada C."/>
            <person name="Ashburner M."/>
            <person name="Gelbart W.M."/>
            <person name="Rubin G.M."/>
            <person name="Lewis S.E."/>
        </authorList>
    </citation>
    <scope>GENOME REANNOTATION</scope>
    <scope>ALTERNATIVE SPLICING</scope>
    <source>
        <strain>Berkeley</strain>
    </source>
</reference>
<reference key="3">
    <citation type="journal article" date="2002" name="Genome Biol.">
        <title>A Drosophila full-length cDNA resource.</title>
        <authorList>
            <person name="Stapleton M."/>
            <person name="Carlson J.W."/>
            <person name="Brokstein P."/>
            <person name="Yu C."/>
            <person name="Champe M."/>
            <person name="George R.A."/>
            <person name="Guarin H."/>
            <person name="Kronmiller B."/>
            <person name="Pacleb J.M."/>
            <person name="Park S."/>
            <person name="Wan K.H."/>
            <person name="Rubin G.M."/>
            <person name="Celniker S.E."/>
        </authorList>
    </citation>
    <scope>NUCLEOTIDE SEQUENCE [LARGE SCALE MRNA] (ISOFORM A)</scope>
    <source>
        <strain>Berkeley</strain>
        <tissue>Embryo</tissue>
    </source>
</reference>
<reference key="4">
    <citation type="journal article" date="2008" name="J. Proteome Res.">
        <title>Phosphoproteome analysis of Drosophila melanogaster embryos.</title>
        <authorList>
            <person name="Zhai B."/>
            <person name="Villen J."/>
            <person name="Beausoleil S.A."/>
            <person name="Mintseris J."/>
            <person name="Gygi S.P."/>
        </authorList>
    </citation>
    <scope>PHOSPHORYLATION [LARGE SCALE ANALYSIS] AT SER-453; THR-642; SER-682; SER-749; SER-753; SER-793; SER-799 AND SER-1099</scope>
    <scope>IDENTIFICATION BY MASS SPECTROMETRY</scope>
    <source>
        <tissue>Embryo</tissue>
    </source>
</reference>
<name>Y5098_DROME</name>
<proteinExistence type="evidence at protein level"/>
<gene>
    <name type="ORF">CG5098</name>
</gene>
<organism>
    <name type="scientific">Drosophila melanogaster</name>
    <name type="common">Fruit fly</name>
    <dbReference type="NCBI Taxonomy" id="7227"/>
    <lineage>
        <taxon>Eukaryota</taxon>
        <taxon>Metazoa</taxon>
        <taxon>Ecdysozoa</taxon>
        <taxon>Arthropoda</taxon>
        <taxon>Hexapoda</taxon>
        <taxon>Insecta</taxon>
        <taxon>Pterygota</taxon>
        <taxon>Neoptera</taxon>
        <taxon>Endopterygota</taxon>
        <taxon>Diptera</taxon>
        <taxon>Brachycera</taxon>
        <taxon>Muscomorpha</taxon>
        <taxon>Ephydroidea</taxon>
        <taxon>Drosophilidae</taxon>
        <taxon>Drosophila</taxon>
        <taxon>Sophophora</taxon>
    </lineage>
</organism>
<evidence type="ECO:0000255" key="1">
    <source>
        <dbReference type="PROSITE-ProRule" id="PRU01146"/>
    </source>
</evidence>
<evidence type="ECO:0000256" key="2">
    <source>
        <dbReference type="SAM" id="MobiDB-lite"/>
    </source>
</evidence>
<evidence type="ECO:0000269" key="3">
    <source>
    </source>
</evidence>
<evidence type="ECO:0000305" key="4"/>
<sequence length="1238" mass="133869">MNPLLAPPYSGTLPFNSMDLSLQSARSAAQPLAKQPPNQQPHQTQQQQQSLIHAPNYPSIQNLTTNATPTSTQLQQQQQQEHLAAMAAAHVSLLQSSRQNQGAPSGNLSNGGDCESLLPPPPPTSVSGNTNHTGSNSSSNSGSNNHIASPHYMQSRDENFKLTQLKRSFEPDLSGKNPQKEKDFGYPSASSASKLPTHNVQQQHANKKPSPLRNYHQQQQPPYNLTPKYNGPQTPPTPQSPLAANPHQMLSPTMDYNQLHLHHQLNSSSGGSYQHMQQDQTQSQSHPQHLHYHNQHATSQTAPPPLLPPLLTSGQFHAQPQDASQQQTASSSQHQTHHSRTAQLTNLDQAVKHKPESEEQPVITDLSYRNSETDKTAANPVPEAPESPYLTTSNEESLESNSNSSNSRKRRKRKASMVMRVTPNENAPEGENSKPQHPQQAANLNNSCSPKKSPKNGGGEFQPFSTQKQSQTENEKTTQENGRGGSPAPAENNSNSNSSTLYNDNENPKTKKQRQALLQRNLTEQHRMQQDDEPPKNHTSPAMPPPSPQSNSSSSSSSSSSANTHSSQSSHAVNNIPKPEINNKATTDTPASPALVEQGDIDAKPAVSVHECDEEEEPAVNKVSPAHPDPPTTAAVAAPPATESPKKSSPAANSESCPFGEVEDKLEQMFAGIEEETERISSPEKPAEESAAMVAHNLTAQLALDPSKTLDTPAENQTSVLAVLAPNQTPTPEIRPVATKAAMKSTMPSPVHSPIPQSRSTSTPLVAGDDSKSNTPVPAKAPAPRRPPPRRLSMGMDASLLRFMIDDPPAKKPGRKKKVTKEPDFEDDDKPSTSAAAAAALAARQLSEAASATKSKPAAGAKKKNAGVKGKKGSAGKGNAKNAKQNGKKSARKPAFTTDEDSTPAPTNGGGSVPELRFKSPFILIKPDGSVSIKNTHSAEDVNEKQTKVKKAPHERKNLRGMHSSTLSNRYDADTTDSTWICVFCKRGPHKLGLGDLFGPYLVTSDCDEYRAAVQTPGAQDIDGMFVNKRRREDMVKGQERNLPAVPATLANIMQAPKISMHKRKRKQTHDSSISYSDDPNESRSQCSSVDLLDCSTESKFVETFRGMGKTSENGFEVWLHEDCAVWSNDIHLIGAHVNGLDAAVWDSTRYQCVLCQQTGASICCFQRCCKAAAHVPCGRSANWSLSEEDRKVYCHLHRHEPGVVEPIKTESIAPVEVSVATPPAPAPPPAFNIHSLP</sequence>
<protein>
    <recommendedName>
        <fullName>Uncharacterized protein CG5098</fullName>
    </recommendedName>
</protein>
<accession>Q6AWG9</accession>
<accession>A8DYH9</accession>
<comment type="alternative products">
    <event type="alternative splicing"/>
    <isoform>
        <id>Q6AWG9-1</id>
        <name>A</name>
        <sequence type="displayed"/>
    </isoform>
    <isoform>
        <id>Q6AWG9-2</id>
        <name>B</name>
        <sequence type="described" ref="VSP_035949 VSP_035950"/>
    </isoform>
</comment>
<keyword id="KW-0025">Alternative splicing</keyword>
<keyword id="KW-0479">Metal-binding</keyword>
<keyword id="KW-0597">Phosphoprotein</keyword>
<keyword id="KW-1185">Reference proteome</keyword>
<keyword id="KW-0862">Zinc</keyword>
<keyword id="KW-0863">Zinc-finger</keyword>